<reference key="1">
    <citation type="submission" date="2000-09" db="EMBL/GenBank/DDBJ databases">
        <title>Beta-galactosidase of Vibrio vulnificus.</title>
        <authorList>
            <person name="Kim S.Y."/>
            <person name="Lee S.E."/>
            <person name="Morris J.G. Jr."/>
            <person name="Chung S.S."/>
            <person name="Rhee J.H."/>
        </authorList>
    </citation>
    <scope>NUCLEOTIDE SEQUENCE [GENOMIC DNA]</scope>
</reference>
<reference key="2">
    <citation type="submission" date="2001-03" db="EMBL/GenBank/DDBJ databases">
        <title>Beta-galactosidase of Vibrio vulnificus ATCC 29307.</title>
        <authorList>
            <person name="Baek C.H."/>
            <person name="Park D.K."/>
            <person name="Lee K.E."/>
            <person name="Kim Y.T."/>
            <person name="You K.H."/>
            <person name="Hwang W."/>
            <person name="Kim K.S."/>
        </authorList>
    </citation>
    <scope>NUCLEOTIDE SEQUENCE [GENOMIC DNA]</scope>
    <source>
        <strain>ATCC 29307 / CDC A8694</strain>
    </source>
</reference>
<reference key="3">
    <citation type="submission" date="2002-12" db="EMBL/GenBank/DDBJ databases">
        <title>Complete genome sequence of Vibrio vulnificus CMCP6.</title>
        <authorList>
            <person name="Rhee J.H."/>
            <person name="Kim S.Y."/>
            <person name="Chung S.S."/>
            <person name="Kim J.J."/>
            <person name="Moon Y.H."/>
            <person name="Jeong H."/>
            <person name="Choy H.E."/>
        </authorList>
    </citation>
    <scope>NUCLEOTIDE SEQUENCE [LARGE SCALE GENOMIC DNA]</scope>
    <source>
        <strain>CMCP6</strain>
    </source>
</reference>
<accession>Q8D4H3</accession>
<accession>Q9AEQ8</accession>
<accession>Q9AHK2</accession>
<evidence type="ECO:0000255" key="1">
    <source>
        <dbReference type="HAMAP-Rule" id="MF_01687"/>
    </source>
</evidence>
<evidence type="ECO:0000305" key="2"/>
<proteinExistence type="inferred from homology"/>
<sequence length="1032" mass="117737">MTAFSEILQRRDWENPQSVNIHCLKAHSPLASFRDMAHARDGIHAQRQSLNGQWKFKLFDAPEQVDGQFTQADFNDAEWDEIPVPSNWQLQGYDKPIYANIKYPFDVNPPFVPSDNPTGCYRTRVSLSPEDLLNTQRIIFDGVNSAFHLWCNGTWVGYSQDSRLPAEFDLTSHLVAGENTLAVMVMRWCDGSYLEDQDMWWLSGIFRDVTLLSKPQHCIEDVFITPELDACYRDGSLSIVTTIAAPETYQVQVQLFEGTQAVTEPNIARPHNRRIDERGTWNDDVVFQTLHLREPKKWTAETPNLYRLVVSLLDENGTHLESEAYPVGFRKVEISEGQLKLNGKPLLIRGVNRHEHHPELGHVMTEEDMIRDICLMKQYNFNAVRTAHYPNHPRWYELCDQYGLYVCDEANIETHGMQPMSRLSSDPQWAHAYMSRYTQMVLRDKNHPSIIIWSLGNESGHGSNHNAMYAWSKNFDPSRPVQYEGGGSNTTATDIIAPMYARVNTLVADEAVPKWPIKKWISLPNETRPLILCEYAHAMGNSLGSFDEYWAAFREFPRLQGGFIWDWVDQGLSQWDENGQHFWAYGGDFGDEINDRQFCINGLIFPDRTVHPTLQEAKYCQRMITVSLQEQTQKACTLLVTNENLFRTTDNEQLNWSLLENGQVIQTGSQVLSVEADSQTRLEIALNFTPKAQAQYYLNTDICLIEATSWAPAGHVVATEQMALRNHAGLAMPTLRTQPAPKLTENGHAIVVSSLDEKHQWRWDSQSGLLMEWNVDGKAQMLAAPQDNFFRAPLDNDIGISEVDNVDPNAWVCRWEMAGIGQWERHCVQCESETLAHAVVVTTTFAYHFGGDVQAITQWTHTLSNDGEMLLDVDVTLADALPPMPRIGLELQLPLHQADTPITWQGLGPFENYPDRLAAARFGLHTQTLAQMHTPYIFPTDSGLRCGTQWLQVNELAISGDFQFSVSQYAQQQLAEAKHTHDLLAQERIYLRLDHQHMGVGGDDSWSPSVHKEFQLTEKHYRYQLRFSPASR</sequence>
<dbReference type="EC" id="3.2.1.23" evidence="1"/>
<dbReference type="EMBL" id="AF305636">
    <property type="protein sequence ID" value="AAK15465.1"/>
    <property type="molecule type" value="Genomic_DNA"/>
</dbReference>
<dbReference type="EMBL" id="AY028965">
    <property type="protein sequence ID" value="AAK29750.1"/>
    <property type="molecule type" value="Genomic_DNA"/>
</dbReference>
<dbReference type="EMBL" id="AE016796">
    <property type="protein sequence ID" value="AAO08215.2"/>
    <property type="molecule type" value="Genomic_DNA"/>
</dbReference>
<dbReference type="RefSeq" id="WP_011082210.1">
    <property type="nucleotide sequence ID" value="NC_004460.2"/>
</dbReference>
<dbReference type="SMR" id="Q8D4H3"/>
<dbReference type="CAZy" id="GH2">
    <property type="family name" value="Glycoside Hydrolase Family 2"/>
</dbReference>
<dbReference type="KEGG" id="vvu:VV2_1327"/>
<dbReference type="HOGENOM" id="CLU_002346_0_2_6"/>
<dbReference type="Proteomes" id="UP000002275">
    <property type="component" value="Chromosome 2"/>
</dbReference>
<dbReference type="GO" id="GO:0009341">
    <property type="term" value="C:beta-galactosidase complex"/>
    <property type="evidence" value="ECO:0007669"/>
    <property type="project" value="InterPro"/>
</dbReference>
<dbReference type="GO" id="GO:0004565">
    <property type="term" value="F:beta-galactosidase activity"/>
    <property type="evidence" value="ECO:0007669"/>
    <property type="project" value="UniProtKB-EC"/>
</dbReference>
<dbReference type="GO" id="GO:0030246">
    <property type="term" value="F:carbohydrate binding"/>
    <property type="evidence" value="ECO:0007669"/>
    <property type="project" value="InterPro"/>
</dbReference>
<dbReference type="GO" id="GO:0000287">
    <property type="term" value="F:magnesium ion binding"/>
    <property type="evidence" value="ECO:0007669"/>
    <property type="project" value="UniProtKB-UniRule"/>
</dbReference>
<dbReference type="GO" id="GO:0005990">
    <property type="term" value="P:lactose catabolic process"/>
    <property type="evidence" value="ECO:0007669"/>
    <property type="project" value="TreeGrafter"/>
</dbReference>
<dbReference type="FunFam" id="3.20.20.80:FF:000018">
    <property type="entry name" value="Beta-galactosidase"/>
    <property type="match status" value="1"/>
</dbReference>
<dbReference type="Gene3D" id="2.70.98.10">
    <property type="match status" value="1"/>
</dbReference>
<dbReference type="Gene3D" id="2.60.120.260">
    <property type="entry name" value="Galactose-binding domain-like"/>
    <property type="match status" value="1"/>
</dbReference>
<dbReference type="Gene3D" id="3.20.20.80">
    <property type="entry name" value="Glycosidases"/>
    <property type="match status" value="1"/>
</dbReference>
<dbReference type="Gene3D" id="2.60.40.10">
    <property type="entry name" value="Immunoglobulins"/>
    <property type="match status" value="2"/>
</dbReference>
<dbReference type="HAMAP" id="MF_01687">
    <property type="entry name" value="Beta_gal"/>
    <property type="match status" value="1"/>
</dbReference>
<dbReference type="InterPro" id="IPR004199">
    <property type="entry name" value="B-gal_small/dom_5"/>
</dbReference>
<dbReference type="InterPro" id="IPR050347">
    <property type="entry name" value="Bact_Beta-galactosidase"/>
</dbReference>
<dbReference type="InterPro" id="IPR036156">
    <property type="entry name" value="Beta-gal/glucu_dom_sf"/>
</dbReference>
<dbReference type="InterPro" id="IPR011013">
    <property type="entry name" value="Gal_mutarotase_sf_dom"/>
</dbReference>
<dbReference type="InterPro" id="IPR008979">
    <property type="entry name" value="Galactose-bd-like_sf"/>
</dbReference>
<dbReference type="InterPro" id="IPR014718">
    <property type="entry name" value="GH-type_carb-bd"/>
</dbReference>
<dbReference type="InterPro" id="IPR006101">
    <property type="entry name" value="Glyco_hydro_2"/>
</dbReference>
<dbReference type="InterPro" id="IPR023232">
    <property type="entry name" value="Glyco_hydro_2_AS"/>
</dbReference>
<dbReference type="InterPro" id="IPR023933">
    <property type="entry name" value="Glyco_hydro_2_beta_Galsidase"/>
</dbReference>
<dbReference type="InterPro" id="IPR006103">
    <property type="entry name" value="Glyco_hydro_2_cat"/>
</dbReference>
<dbReference type="InterPro" id="IPR006102">
    <property type="entry name" value="Glyco_hydro_2_Ig-like"/>
</dbReference>
<dbReference type="InterPro" id="IPR006104">
    <property type="entry name" value="Glyco_hydro_2_N"/>
</dbReference>
<dbReference type="InterPro" id="IPR017853">
    <property type="entry name" value="Glycoside_hydrolase_SF"/>
</dbReference>
<dbReference type="InterPro" id="IPR013783">
    <property type="entry name" value="Ig-like_fold"/>
</dbReference>
<dbReference type="InterPro" id="IPR032312">
    <property type="entry name" value="LacZ_4"/>
</dbReference>
<dbReference type="NCBIfam" id="NF007074">
    <property type="entry name" value="PRK09525.1"/>
    <property type="match status" value="1"/>
</dbReference>
<dbReference type="PANTHER" id="PTHR46323">
    <property type="entry name" value="BETA-GALACTOSIDASE"/>
    <property type="match status" value="1"/>
</dbReference>
<dbReference type="PANTHER" id="PTHR46323:SF2">
    <property type="entry name" value="BETA-GALACTOSIDASE"/>
    <property type="match status" value="1"/>
</dbReference>
<dbReference type="Pfam" id="PF02929">
    <property type="entry name" value="Bgal_small_N"/>
    <property type="match status" value="1"/>
</dbReference>
<dbReference type="Pfam" id="PF00703">
    <property type="entry name" value="Glyco_hydro_2"/>
    <property type="match status" value="1"/>
</dbReference>
<dbReference type="Pfam" id="PF02836">
    <property type="entry name" value="Glyco_hydro_2_C"/>
    <property type="match status" value="1"/>
</dbReference>
<dbReference type="Pfam" id="PF02837">
    <property type="entry name" value="Glyco_hydro_2_N"/>
    <property type="match status" value="1"/>
</dbReference>
<dbReference type="Pfam" id="PF16353">
    <property type="entry name" value="LacZ_4"/>
    <property type="match status" value="1"/>
</dbReference>
<dbReference type="PRINTS" id="PR00132">
    <property type="entry name" value="GLHYDRLASE2"/>
</dbReference>
<dbReference type="SMART" id="SM01038">
    <property type="entry name" value="Bgal_small_N"/>
    <property type="match status" value="1"/>
</dbReference>
<dbReference type="SUPFAM" id="SSF51445">
    <property type="entry name" value="(Trans)glycosidases"/>
    <property type="match status" value="1"/>
</dbReference>
<dbReference type="SUPFAM" id="SSF49303">
    <property type="entry name" value="beta-Galactosidase/glucuronidase domain"/>
    <property type="match status" value="2"/>
</dbReference>
<dbReference type="SUPFAM" id="SSF74650">
    <property type="entry name" value="Galactose mutarotase-like"/>
    <property type="match status" value="1"/>
</dbReference>
<dbReference type="SUPFAM" id="SSF49785">
    <property type="entry name" value="Galactose-binding domain-like"/>
    <property type="match status" value="1"/>
</dbReference>
<dbReference type="PROSITE" id="PS00608">
    <property type="entry name" value="GLYCOSYL_HYDROL_F2_2"/>
    <property type="match status" value="1"/>
</dbReference>
<organism>
    <name type="scientific">Vibrio vulnificus (strain CMCP6)</name>
    <dbReference type="NCBI Taxonomy" id="216895"/>
    <lineage>
        <taxon>Bacteria</taxon>
        <taxon>Pseudomonadati</taxon>
        <taxon>Pseudomonadota</taxon>
        <taxon>Gammaproteobacteria</taxon>
        <taxon>Vibrionales</taxon>
        <taxon>Vibrionaceae</taxon>
        <taxon>Vibrio</taxon>
    </lineage>
</organism>
<keyword id="KW-0326">Glycosidase</keyword>
<keyword id="KW-0378">Hydrolase</keyword>
<keyword id="KW-0460">Magnesium</keyword>
<keyword id="KW-0479">Metal-binding</keyword>
<keyword id="KW-0915">Sodium</keyword>
<protein>
    <recommendedName>
        <fullName evidence="1">Beta-galactosidase</fullName>
        <shortName evidence="1">Beta-gal</shortName>
        <ecNumber evidence="1">3.2.1.23</ecNumber>
    </recommendedName>
    <alternativeName>
        <fullName evidence="1">Lactase</fullName>
    </alternativeName>
</protein>
<name>BGAL_VIBVU</name>
<gene>
    <name evidence="1" type="primary">lacZ</name>
    <name type="ordered locus">VV2_1327</name>
</gene>
<comment type="catalytic activity">
    <reaction evidence="1">
        <text>Hydrolysis of terminal non-reducing beta-D-galactose residues in beta-D-galactosides.</text>
        <dbReference type="EC" id="3.2.1.23"/>
    </reaction>
</comment>
<comment type="cofactor">
    <cofactor evidence="1">
        <name>Mg(2+)</name>
        <dbReference type="ChEBI" id="CHEBI:18420"/>
    </cofactor>
    <text evidence="1">Binds 2 magnesium ions per monomer.</text>
</comment>
<comment type="cofactor">
    <cofactor evidence="1">
        <name>Na(+)</name>
        <dbReference type="ChEBI" id="CHEBI:29101"/>
    </cofactor>
    <text evidence="1">Binds 1 sodium ion per monomer.</text>
</comment>
<comment type="subunit">
    <text evidence="1">Homotetramer.</text>
</comment>
<comment type="similarity">
    <text evidence="1">Belongs to the glycosyl hydrolase 2 family.</text>
</comment>
<feature type="chain" id="PRO_0000367012" description="Beta-galactosidase">
    <location>
        <begin position="1"/>
        <end position="1032"/>
    </location>
</feature>
<feature type="active site" description="Proton donor" evidence="1">
    <location>
        <position position="458"/>
    </location>
</feature>
<feature type="active site" description="Nucleophile" evidence="1">
    <location>
        <position position="534"/>
    </location>
</feature>
<feature type="binding site" evidence="1">
    <location>
        <position position="100"/>
    </location>
    <ligand>
        <name>substrate</name>
    </ligand>
</feature>
<feature type="binding site" evidence="1">
    <location>
        <position position="198"/>
    </location>
    <ligand>
        <name>Na(+)</name>
        <dbReference type="ChEBI" id="CHEBI:29101"/>
    </ligand>
</feature>
<feature type="binding site" evidence="1">
    <location>
        <position position="198"/>
    </location>
    <ligand>
        <name>substrate</name>
    </ligand>
</feature>
<feature type="binding site" evidence="1">
    <location>
        <position position="413"/>
    </location>
    <ligand>
        <name>Mg(2+)</name>
        <dbReference type="ChEBI" id="CHEBI:18420"/>
        <label>1</label>
    </ligand>
</feature>
<feature type="binding site" evidence="1">
    <location>
        <position position="415"/>
    </location>
    <ligand>
        <name>Mg(2+)</name>
        <dbReference type="ChEBI" id="CHEBI:18420"/>
        <label>1</label>
    </ligand>
</feature>
<feature type="binding site" evidence="1">
    <location>
        <position position="458"/>
    </location>
    <ligand>
        <name>Mg(2+)</name>
        <dbReference type="ChEBI" id="CHEBI:18420"/>
        <label>1</label>
    </ligand>
</feature>
<feature type="binding site" evidence="1">
    <location>
        <position position="458"/>
    </location>
    <ligand>
        <name>substrate</name>
    </ligand>
</feature>
<feature type="binding site" evidence="1">
    <location>
        <begin position="534"/>
        <end position="537"/>
    </location>
    <ligand>
        <name>substrate</name>
    </ligand>
</feature>
<feature type="binding site" evidence="1">
    <location>
        <position position="594"/>
    </location>
    <ligand>
        <name>Mg(2+)</name>
        <dbReference type="ChEBI" id="CHEBI:18420"/>
        <label>2</label>
    </ligand>
</feature>
<feature type="binding site" evidence="1">
    <location>
        <position position="598"/>
    </location>
    <ligand>
        <name>Na(+)</name>
        <dbReference type="ChEBI" id="CHEBI:29101"/>
    </ligand>
</feature>
<feature type="binding site" evidence="1">
    <location>
        <position position="601"/>
    </location>
    <ligand>
        <name>Na(+)</name>
        <dbReference type="ChEBI" id="CHEBI:29101"/>
    </ligand>
</feature>
<feature type="binding site" evidence="1">
    <location>
        <position position="601"/>
    </location>
    <ligand>
        <name>substrate</name>
    </ligand>
</feature>
<feature type="binding site" evidence="1">
    <location>
        <position position="1006"/>
    </location>
    <ligand>
        <name>substrate</name>
    </ligand>
</feature>
<feature type="site" description="Transition state stabilizer" evidence="1">
    <location>
        <position position="354"/>
    </location>
</feature>
<feature type="site" description="Transition state stabilizer" evidence="1">
    <location>
        <position position="388"/>
    </location>
</feature>
<feature type="sequence conflict" description="In Ref. 1; AAK15465 and 2; AAK29750." evidence="2" ref="1 2">
    <original>Q</original>
    <variation>H</variation>
    <location>
        <position position="91"/>
    </location>
</feature>
<feature type="sequence conflict" description="In Ref. 1; AAK15465 and 2; AAK29750." evidence="2" ref="1 2">
    <original>L</original>
    <variation>F</variation>
    <location>
        <position position="127"/>
    </location>
</feature>
<feature type="sequence conflict" description="In Ref. 1; AAK15465 and 2; AAK29750." evidence="2" ref="1 2">
    <original>DLL</original>
    <variation>ELA</variation>
    <location>
        <begin position="131"/>
        <end position="133"/>
    </location>
</feature>
<feature type="sequence conflict" description="In Ref. 1; AAK15465 and 2; AAK29750." evidence="2" ref="1 2">
    <original>E</original>
    <variation>D</variation>
    <location>
        <position position="227"/>
    </location>
</feature>
<feature type="sequence conflict" description="In Ref. 1; AAK15465 and 2; AAK29750." evidence="2" ref="1 2">
    <location>
        <position position="284"/>
    </location>
</feature>
<feature type="sequence conflict" description="In Ref. 1; AAK15465." evidence="2" ref="1">
    <original>N</original>
    <variation>K</variation>
    <location>
        <position position="382"/>
    </location>
</feature>
<feature type="sequence conflict" description="In Ref. 1; AAK15465." evidence="2" ref="1">
    <original>N</original>
    <variation>K</variation>
    <location>
        <position position="644"/>
    </location>
</feature>
<feature type="sequence conflict" description="In Ref. 1; AAK15465 and 2; AAK29750." evidence="2" ref="1 2">
    <original>Y</original>
    <variation>H</variation>
    <location>
        <position position="697"/>
    </location>
</feature>
<feature type="sequence conflict" description="In Ref. 1; AAK15465 and 2; AAK29750." evidence="2" ref="1 2">
    <original>E</original>
    <variation>Q</variation>
    <location>
        <position position="745"/>
    </location>
</feature>
<feature type="sequence conflict" description="In Ref. 1; AAK15465 and 2; AAK29750." evidence="2" ref="1 2">
    <original>A</original>
    <variation>T</variation>
    <location>
        <position position="898"/>
    </location>
</feature>
<feature type="sequence conflict" description="In Ref. 1; AAK15465 and 2; AAK29750." evidence="2" ref="1 2">
    <original>S</original>
    <variation>K</variation>
    <location>
        <position position="1028"/>
    </location>
</feature>